<dbReference type="EMBL" id="AY156922">
    <property type="protein sequence ID" value="AAO18338.1"/>
    <property type="molecule type" value="mRNA"/>
</dbReference>
<dbReference type="EMBL" id="BC086343">
    <property type="protein sequence ID" value="AAH86343.1"/>
    <property type="molecule type" value="mRNA"/>
</dbReference>
<dbReference type="RefSeq" id="NP_001013258.1">
    <property type="nucleotide sequence ID" value="NM_001013240.2"/>
</dbReference>
<dbReference type="RefSeq" id="NP_001253983.1">
    <property type="nucleotide sequence ID" value="NM_001267054.1"/>
</dbReference>
<dbReference type="RefSeq" id="NP_001253984.1">
    <property type="nucleotide sequence ID" value="NM_001267055.1"/>
</dbReference>
<dbReference type="RefSeq" id="NP_001382632.1">
    <property type="nucleotide sequence ID" value="NM_001395703.1"/>
</dbReference>
<dbReference type="RefSeq" id="NP_001382633.1">
    <property type="nucleotide sequence ID" value="NM_001395704.1"/>
</dbReference>
<dbReference type="RefSeq" id="XP_006238304.1">
    <property type="nucleotide sequence ID" value="XM_006238242.2"/>
</dbReference>
<dbReference type="RefSeq" id="XP_008762018.1">
    <property type="nucleotide sequence ID" value="XM_008763796.2"/>
</dbReference>
<dbReference type="RefSeq" id="XP_063144179.1">
    <property type="nucleotide sequence ID" value="XM_063288109.1"/>
</dbReference>
<dbReference type="SMR" id="Q6YDN7"/>
<dbReference type="FunCoup" id="Q6YDN7">
    <property type="interactions" value="1408"/>
</dbReference>
<dbReference type="STRING" id="10116.ENSRNOP00000049754"/>
<dbReference type="iPTMnet" id="Q6YDN7"/>
<dbReference type="PhosphoSitePlus" id="Q6YDN7"/>
<dbReference type="PaxDb" id="10116-ENSRNOP00000049754"/>
<dbReference type="GeneID" id="366381"/>
<dbReference type="KEGG" id="rno:366381"/>
<dbReference type="AGR" id="RGD:1311342"/>
<dbReference type="CTD" id="246184"/>
<dbReference type="RGD" id="1311342">
    <property type="gene designation" value="Cdc26"/>
</dbReference>
<dbReference type="eggNOG" id="ENOG502S5GK">
    <property type="taxonomic scope" value="Eukaryota"/>
</dbReference>
<dbReference type="HOGENOM" id="CLU_190086_0_0_1"/>
<dbReference type="InParanoid" id="Q6YDN7"/>
<dbReference type="OrthoDB" id="2422341at2759"/>
<dbReference type="PhylomeDB" id="Q6YDN7"/>
<dbReference type="TreeFam" id="TF101057"/>
<dbReference type="Reactome" id="R-RNO-141430">
    <property type="pathway name" value="Inactivation of APC/C via direct inhibition of the APC/C complex"/>
</dbReference>
<dbReference type="Reactome" id="R-RNO-174048">
    <property type="pathway name" value="APC/C:Cdc20 mediated degradation of Cyclin B"/>
</dbReference>
<dbReference type="Reactome" id="R-RNO-174084">
    <property type="pathway name" value="Autodegradation of Cdh1 by Cdh1:APC/C"/>
</dbReference>
<dbReference type="Reactome" id="R-RNO-174154">
    <property type="pathway name" value="APC/C:Cdc20 mediated degradation of Securin"/>
</dbReference>
<dbReference type="Reactome" id="R-RNO-174178">
    <property type="pathway name" value="APC/C:Cdh1 mediated degradation of Cdc20 and other APC/C:Cdh1 targeted proteins in late mitosis/early G1"/>
</dbReference>
<dbReference type="Reactome" id="R-RNO-174184">
    <property type="pathway name" value="Cdc20:Phospho-APC/C mediated degradation of Cyclin A"/>
</dbReference>
<dbReference type="Reactome" id="R-RNO-176407">
    <property type="pathway name" value="Conversion from APC/C:Cdc20 to APC/C:Cdh1 in late anaphase"/>
</dbReference>
<dbReference type="Reactome" id="R-RNO-176408">
    <property type="pathway name" value="Regulation of APC/C activators between G1/S and early anaphase"/>
</dbReference>
<dbReference type="Reactome" id="R-RNO-176412">
    <property type="pathway name" value="Phosphorylation of the APC/C"/>
</dbReference>
<dbReference type="Reactome" id="R-RNO-179409">
    <property type="pathway name" value="APC-Cdc20 mediated degradation of Nek2A"/>
</dbReference>
<dbReference type="Reactome" id="R-RNO-2467813">
    <property type="pathway name" value="Separation of Sister Chromatids"/>
</dbReference>
<dbReference type="Reactome" id="R-RNO-2559582">
    <property type="pathway name" value="Senescence-Associated Secretory Phenotype (SASP)"/>
</dbReference>
<dbReference type="Reactome" id="R-RNO-68867">
    <property type="pathway name" value="Assembly of the pre-replicative complex"/>
</dbReference>
<dbReference type="Reactome" id="R-RNO-69017">
    <property type="pathway name" value="CDK-mediated phosphorylation and removal of Cdc6"/>
</dbReference>
<dbReference type="Reactome" id="R-RNO-983168">
    <property type="pathway name" value="Antigen processing: Ubiquitination &amp; Proteasome degradation"/>
</dbReference>
<dbReference type="UniPathway" id="UPA00143"/>
<dbReference type="PRO" id="PR:Q6YDN7"/>
<dbReference type="Proteomes" id="UP000002494">
    <property type="component" value="Chromosome 5"/>
</dbReference>
<dbReference type="Bgee" id="ENSRNOG00000029785">
    <property type="expression patterns" value="Expressed in thymus and 20 other cell types or tissues"/>
</dbReference>
<dbReference type="GO" id="GO:0005680">
    <property type="term" value="C:anaphase-promoting complex"/>
    <property type="evidence" value="ECO:0000250"/>
    <property type="project" value="UniProtKB"/>
</dbReference>
<dbReference type="GO" id="GO:0031145">
    <property type="term" value="P:anaphase-promoting complex-dependent catabolic process"/>
    <property type="evidence" value="ECO:0000250"/>
    <property type="project" value="UniProtKB"/>
</dbReference>
<dbReference type="GO" id="GO:0051301">
    <property type="term" value="P:cell division"/>
    <property type="evidence" value="ECO:0007669"/>
    <property type="project" value="UniProtKB-KW"/>
</dbReference>
<dbReference type="GO" id="GO:0141198">
    <property type="term" value="P:protein branched polyubiquitination"/>
    <property type="evidence" value="ECO:0000250"/>
    <property type="project" value="UniProtKB"/>
</dbReference>
<dbReference type="GO" id="GO:0070979">
    <property type="term" value="P:protein K11-linked ubiquitination"/>
    <property type="evidence" value="ECO:0000250"/>
    <property type="project" value="UniProtKB"/>
</dbReference>
<dbReference type="GO" id="GO:0070936">
    <property type="term" value="P:protein K48-linked ubiquitination"/>
    <property type="evidence" value="ECO:0000250"/>
    <property type="project" value="UniProtKB"/>
</dbReference>
<dbReference type="GO" id="GO:0007346">
    <property type="term" value="P:regulation of mitotic cell cycle"/>
    <property type="evidence" value="ECO:0000318"/>
    <property type="project" value="GO_Central"/>
</dbReference>
<dbReference type="InterPro" id="IPR018860">
    <property type="entry name" value="APC_suCDC26"/>
</dbReference>
<dbReference type="PANTHER" id="PTHR28579">
    <property type="entry name" value="ANAPHASE-PROMOTING COMPLEX SUBUNIT CDC26"/>
    <property type="match status" value="1"/>
</dbReference>
<dbReference type="PANTHER" id="PTHR28579:SF1">
    <property type="entry name" value="ANAPHASE-PROMOTING COMPLEX SUBUNIT CDC26"/>
    <property type="match status" value="1"/>
</dbReference>
<dbReference type="Pfam" id="PF10471">
    <property type="entry name" value="ANAPC_CDC26"/>
    <property type="match status" value="1"/>
</dbReference>
<sequence>MLRRKPTRLELKLDDIEEFENIRKDLEARKKQKEDVEGVGTSDGEGAAGLSSDPKSREQMINDRIGYKPQLKTNNRTSQFGNFEF</sequence>
<keyword id="KW-0131">Cell cycle</keyword>
<keyword id="KW-0132">Cell division</keyword>
<keyword id="KW-0175">Coiled coil</keyword>
<keyword id="KW-0498">Mitosis</keyword>
<keyword id="KW-0539">Nucleus</keyword>
<keyword id="KW-0597">Phosphoprotein</keyword>
<keyword id="KW-1185">Reference proteome</keyword>
<keyword id="KW-0833">Ubl conjugation pathway</keyword>
<name>CDC26_RAT</name>
<evidence type="ECO:0000250" key="1">
    <source>
        <dbReference type="UniProtKB" id="Q8NHZ8"/>
    </source>
</evidence>
<evidence type="ECO:0000255" key="2"/>
<evidence type="ECO:0000256" key="3">
    <source>
        <dbReference type="SAM" id="MobiDB-lite"/>
    </source>
</evidence>
<evidence type="ECO:0000305" key="4"/>
<evidence type="ECO:0007744" key="5">
    <source>
    </source>
</evidence>
<feature type="chain" id="PRO_0000271197" description="Anaphase-promoting complex subunit CDC26">
    <location>
        <begin position="1"/>
        <end position="85"/>
    </location>
</feature>
<feature type="region of interest" description="Disordered" evidence="3">
    <location>
        <begin position="26"/>
        <end position="85"/>
    </location>
</feature>
<feature type="coiled-coil region" evidence="2">
    <location>
        <begin position="7"/>
        <end position="38"/>
    </location>
</feature>
<feature type="compositionally biased region" description="Basic and acidic residues" evidence="3">
    <location>
        <begin position="26"/>
        <end position="36"/>
    </location>
</feature>
<feature type="compositionally biased region" description="Polar residues" evidence="3">
    <location>
        <begin position="71"/>
        <end position="85"/>
    </location>
</feature>
<feature type="modified residue" description="Phosphoserine" evidence="5">
    <location>
        <position position="42"/>
    </location>
</feature>
<proteinExistence type="evidence at protein level"/>
<protein>
    <recommendedName>
        <fullName>Anaphase-promoting complex subunit CDC26</fullName>
    </recommendedName>
    <alternativeName>
        <fullName>Cell division cycle protein 26 homolog</fullName>
    </alternativeName>
    <alternativeName>
        <fullName>Protein BWK-2</fullName>
    </alternativeName>
</protein>
<reference key="1">
    <citation type="submission" date="2002-09" db="EMBL/GenBank/DDBJ databases">
        <title>Cloning of a novel leukemia-related gene.</title>
        <authorList>
            <person name="Koami K."/>
            <person name="Yamakita S."/>
            <person name="Irino T."/>
            <person name="Osaka M."/>
        </authorList>
    </citation>
    <scope>NUCLEOTIDE SEQUENCE [MRNA]</scope>
    <source>
        <strain>Donryu</strain>
    </source>
</reference>
<reference key="2">
    <citation type="journal article" date="2004" name="Genome Res.">
        <title>The status, quality, and expansion of the NIH full-length cDNA project: the Mammalian Gene Collection (MGC).</title>
        <authorList>
            <consortium name="The MGC Project Team"/>
        </authorList>
    </citation>
    <scope>NUCLEOTIDE SEQUENCE [LARGE SCALE MRNA]</scope>
    <source>
        <tissue>Ovary</tissue>
    </source>
</reference>
<reference key="3">
    <citation type="journal article" date="2012" name="Nat. Commun.">
        <title>Quantitative maps of protein phosphorylation sites across 14 different rat organs and tissues.</title>
        <authorList>
            <person name="Lundby A."/>
            <person name="Secher A."/>
            <person name="Lage K."/>
            <person name="Nordsborg N.B."/>
            <person name="Dmytriyev A."/>
            <person name="Lundby C."/>
            <person name="Olsen J.V."/>
        </authorList>
    </citation>
    <scope>PHOSPHORYLATION [LARGE SCALE ANALYSIS] AT SER-42</scope>
    <scope>IDENTIFICATION BY MASS SPECTROMETRY [LARGE SCALE ANALYSIS]</scope>
</reference>
<organism>
    <name type="scientific">Rattus norvegicus</name>
    <name type="common">Rat</name>
    <dbReference type="NCBI Taxonomy" id="10116"/>
    <lineage>
        <taxon>Eukaryota</taxon>
        <taxon>Metazoa</taxon>
        <taxon>Chordata</taxon>
        <taxon>Craniata</taxon>
        <taxon>Vertebrata</taxon>
        <taxon>Euteleostomi</taxon>
        <taxon>Mammalia</taxon>
        <taxon>Eutheria</taxon>
        <taxon>Euarchontoglires</taxon>
        <taxon>Glires</taxon>
        <taxon>Rodentia</taxon>
        <taxon>Myomorpha</taxon>
        <taxon>Muroidea</taxon>
        <taxon>Muridae</taxon>
        <taxon>Murinae</taxon>
        <taxon>Rattus</taxon>
    </lineage>
</organism>
<comment type="function">
    <text evidence="1">Component of the anaphase promoting complex/cyclosome (APC/C), a cell cycle-regulated E3 ubiquitin ligase that controls progression through mitosis and the G1 phase of the cell cycle. The APC/C complex acts by mediating ubiquitination and subsequent degradation of target proteins: it mainly mediates the formation of 'Lys-11'-linked polyubiquitin chains and, to a lower extent, the formation of 'Lys-48'- and 'Lys-63'-linked polyubiquitin chains. The APC/C complex catalyzes assembly of branched 'Lys-11'-/'Lys-48'-linked branched ubiquitin chains on target proteins. May recruit the E2 ubiquitin-conjugating enzymes to the complex.</text>
</comment>
<comment type="pathway">
    <text evidence="1">Protein modification; protein ubiquitination.</text>
</comment>
<comment type="subunit">
    <text evidence="1">V-shaped homodimer. Interacts with CDC16. The mammalian APC/C is composed at least of 14 distinct subunits ANAPC1, ANAPC2, CDC27/APC3, ANAPC4, ANAPC5, CDC16/APC6, ANAPC7, CDC23/APC8, ANAPC10, ANAPC11, CDC26/APC12, ANAPC13, ANAPC15 and ANAPC16 that assemble into a complex of at least 19 chains with a combined molecular mass of around 1.2 MDa; APC/C interacts with FZR1 and FBXO5.</text>
</comment>
<comment type="subcellular location">
    <subcellularLocation>
        <location evidence="4">Nucleus</location>
    </subcellularLocation>
</comment>
<comment type="similarity">
    <text evidence="4">Belongs to the CDC26 family.</text>
</comment>
<accession>Q6YDN7</accession>
<gene>
    <name type="primary">Cdc26</name>
</gene>